<protein>
    <recommendedName>
        <fullName evidence="4 5">RHOMBOID-like protein 5</fullName>
        <shortName evidence="4 5">AtRBL5</shortName>
        <ecNumber evidence="2">3.4.21.105</ecNumber>
    </recommendedName>
</protein>
<sequence>MGKRPPIPPDIENGPPPPARPHFRPPIPVPWVAWLVPLILAANFVTFATTMYVNDCPARSDECLLFDVLGRLSFQPIKENMLLGPSIPTLRKLGALERRLVEEGERWRLISCIWLHGGFLHLMANMISLMCIGMRLEQEFGFMRIGALYVISGLGGSLVSCLTDSQGERVSVGASGALFGLLGAMLSELITNWTIYENKCTALMTLILIIVLNLSVGFLPRVDNSAHFGGFLAGFFLGFVLLLRPQYGYVNPKYIPPGYDMKHKKSKHKCYQHIFRFTSLAILLAGFIAGYTKLLREHTIQSMPFRDFN</sequence>
<proteinExistence type="inferred from homology"/>
<feature type="chain" id="PRO_0000433326" description="RHOMBOID-like protein 5">
    <location>
        <begin position="1"/>
        <end position="309"/>
    </location>
</feature>
<feature type="transmembrane region" description="Helical" evidence="3">
    <location>
        <begin position="27"/>
        <end position="47"/>
    </location>
</feature>
<feature type="transmembrane region" description="Helical" evidence="3">
    <location>
        <begin position="113"/>
        <end position="133"/>
    </location>
</feature>
<feature type="transmembrane region" description="Helical" evidence="3">
    <location>
        <begin position="140"/>
        <end position="160"/>
    </location>
</feature>
<feature type="transmembrane region" description="Helical" evidence="3">
    <location>
        <begin position="170"/>
        <end position="190"/>
    </location>
</feature>
<feature type="transmembrane region" description="Helical" evidence="3">
    <location>
        <begin position="200"/>
        <end position="220"/>
    </location>
</feature>
<feature type="transmembrane region" description="Helical" evidence="3">
    <location>
        <begin position="222"/>
        <end position="242"/>
    </location>
</feature>
<feature type="transmembrane region" description="Helical" evidence="3">
    <location>
        <begin position="274"/>
        <end position="294"/>
    </location>
</feature>
<feature type="active site" description="Nucleophile" evidence="1">
    <location>
        <position position="175"/>
    </location>
</feature>
<feature type="active site" description="Charge relay system" evidence="1">
    <location>
        <position position="227"/>
    </location>
</feature>
<organism evidence="10">
    <name type="scientific">Arabidopsis thaliana</name>
    <name type="common">Mouse-ear cress</name>
    <dbReference type="NCBI Taxonomy" id="3702"/>
    <lineage>
        <taxon>Eukaryota</taxon>
        <taxon>Viridiplantae</taxon>
        <taxon>Streptophyta</taxon>
        <taxon>Embryophyta</taxon>
        <taxon>Tracheophyta</taxon>
        <taxon>Spermatophyta</taxon>
        <taxon>Magnoliopsida</taxon>
        <taxon>eudicotyledons</taxon>
        <taxon>Gunneridae</taxon>
        <taxon>Pentapetalae</taxon>
        <taxon>rosids</taxon>
        <taxon>malvids</taxon>
        <taxon>Brassicales</taxon>
        <taxon>Brassicaceae</taxon>
        <taxon>Camelineae</taxon>
        <taxon>Arabidopsis</taxon>
    </lineage>
</organism>
<gene>
    <name evidence="4 5" type="primary">RBL5</name>
    <name evidence="8" type="ordered locus">At1g52580</name>
    <name evidence="9" type="ORF">F6D8.20</name>
</gene>
<keyword id="KW-0378">Hydrolase</keyword>
<keyword id="KW-0472">Membrane</keyword>
<keyword id="KW-0645">Protease</keyword>
<keyword id="KW-1185">Reference proteome</keyword>
<keyword id="KW-0720">Serine protease</keyword>
<keyword id="KW-0812">Transmembrane</keyword>
<keyword id="KW-1133">Transmembrane helix</keyword>
<evidence type="ECO:0000250" key="1">
    <source>
        <dbReference type="UniProtKB" id="P54493"/>
    </source>
</evidence>
<evidence type="ECO:0000250" key="2">
    <source>
        <dbReference type="UniProtKB" id="Q9CAN1"/>
    </source>
</evidence>
<evidence type="ECO:0000255" key="3"/>
<evidence type="ECO:0000303" key="4">
    <source>
    </source>
</evidence>
<evidence type="ECO:0000303" key="5">
    <source>
    </source>
</evidence>
<evidence type="ECO:0000303" key="6">
    <source>
    </source>
</evidence>
<evidence type="ECO:0000305" key="7"/>
<evidence type="ECO:0000312" key="8">
    <source>
        <dbReference type="Araport" id="AT1G52580"/>
    </source>
</evidence>
<evidence type="ECO:0000312" key="9">
    <source>
        <dbReference type="EMBL" id="AAD55606.1"/>
    </source>
</evidence>
<evidence type="ECO:0000312" key="10">
    <source>
        <dbReference type="Proteomes" id="UP000006548"/>
    </source>
</evidence>
<accession>Q9SSR0</accession>
<name>RBL5_ARATH</name>
<reference key="1">
    <citation type="journal article" date="2000" name="Nature">
        <title>Sequence and analysis of chromosome 1 of the plant Arabidopsis thaliana.</title>
        <authorList>
            <person name="Theologis A."/>
            <person name="Ecker J.R."/>
            <person name="Palm C.J."/>
            <person name="Federspiel N.A."/>
            <person name="Kaul S."/>
            <person name="White O."/>
            <person name="Alonso J."/>
            <person name="Altafi H."/>
            <person name="Araujo R."/>
            <person name="Bowman C.L."/>
            <person name="Brooks S.Y."/>
            <person name="Buehler E."/>
            <person name="Chan A."/>
            <person name="Chao Q."/>
            <person name="Chen H."/>
            <person name="Cheuk R.F."/>
            <person name="Chin C.W."/>
            <person name="Chung M.K."/>
            <person name="Conn L."/>
            <person name="Conway A.B."/>
            <person name="Conway A.R."/>
            <person name="Creasy T.H."/>
            <person name="Dewar K."/>
            <person name="Dunn P."/>
            <person name="Etgu P."/>
            <person name="Feldblyum T.V."/>
            <person name="Feng J.-D."/>
            <person name="Fong B."/>
            <person name="Fujii C.Y."/>
            <person name="Gill J.E."/>
            <person name="Goldsmith A.D."/>
            <person name="Haas B."/>
            <person name="Hansen N.F."/>
            <person name="Hughes B."/>
            <person name="Huizar L."/>
            <person name="Hunter J.L."/>
            <person name="Jenkins J."/>
            <person name="Johnson-Hopson C."/>
            <person name="Khan S."/>
            <person name="Khaykin E."/>
            <person name="Kim C.J."/>
            <person name="Koo H.L."/>
            <person name="Kremenetskaia I."/>
            <person name="Kurtz D.B."/>
            <person name="Kwan A."/>
            <person name="Lam B."/>
            <person name="Langin-Hooper S."/>
            <person name="Lee A."/>
            <person name="Lee J.M."/>
            <person name="Lenz C.A."/>
            <person name="Li J.H."/>
            <person name="Li Y.-P."/>
            <person name="Lin X."/>
            <person name="Liu S.X."/>
            <person name="Liu Z.A."/>
            <person name="Luros J.S."/>
            <person name="Maiti R."/>
            <person name="Marziali A."/>
            <person name="Militscher J."/>
            <person name="Miranda M."/>
            <person name="Nguyen M."/>
            <person name="Nierman W.C."/>
            <person name="Osborne B.I."/>
            <person name="Pai G."/>
            <person name="Peterson J."/>
            <person name="Pham P.K."/>
            <person name="Rizzo M."/>
            <person name="Rooney T."/>
            <person name="Rowley D."/>
            <person name="Sakano H."/>
            <person name="Salzberg S.L."/>
            <person name="Schwartz J.R."/>
            <person name="Shinn P."/>
            <person name="Southwick A.M."/>
            <person name="Sun H."/>
            <person name="Tallon L.J."/>
            <person name="Tambunga G."/>
            <person name="Toriumi M.J."/>
            <person name="Town C.D."/>
            <person name="Utterback T."/>
            <person name="Van Aken S."/>
            <person name="Vaysberg M."/>
            <person name="Vysotskaia V.S."/>
            <person name="Walker M."/>
            <person name="Wu D."/>
            <person name="Yu G."/>
            <person name="Fraser C.M."/>
            <person name="Venter J.C."/>
            <person name="Davis R.W."/>
        </authorList>
    </citation>
    <scope>NUCLEOTIDE SEQUENCE [LARGE SCALE GENOMIC DNA]</scope>
    <source>
        <strain>cv. Columbia</strain>
    </source>
</reference>
<reference key="2">
    <citation type="journal article" date="2017" name="Plant J.">
        <title>Araport11: a complete reannotation of the Arabidopsis thaliana reference genome.</title>
        <authorList>
            <person name="Cheng C.Y."/>
            <person name="Krishnakumar V."/>
            <person name="Chan A.P."/>
            <person name="Thibaud-Nissen F."/>
            <person name="Schobel S."/>
            <person name="Town C.D."/>
        </authorList>
    </citation>
    <scope>GENOME REANNOTATION</scope>
    <source>
        <strain>cv. Columbia</strain>
    </source>
</reference>
<reference key="3">
    <citation type="journal article" date="2005" name="FEBS Lett.">
        <title>An Arabidopsis Rhomboid homolog is an intramembrane protease in plants.</title>
        <authorList>
            <person name="Kanaoka M.M."/>
            <person name="Urban S."/>
            <person name="Freeman M."/>
            <person name="Okada K."/>
        </authorList>
    </citation>
    <scope>GENE FAMILY</scope>
    <scope>NOMENCLATURE</scope>
    <source>
        <strain>cv. Columbia</strain>
    </source>
</reference>
<reference key="4">
    <citation type="journal article" date="2006" name="BMC Genomics">
        <title>Cross genome comparisons of serine proteases in Arabidopsis and rice.</title>
        <authorList>
            <person name="Tripathi L.P."/>
            <person name="Sowdhamini R."/>
        </authorList>
    </citation>
    <scope>GENE FAMILY</scope>
    <scope>NOMENCLATURE</scope>
</reference>
<reference key="5">
    <citation type="journal article" date="2006" name="BMC Plant Biol.">
        <title>Protease gene families in Populus and Arabidopsis.</title>
        <authorList>
            <person name="Garcia-Lorenzo M."/>
            <person name="Sjodin A."/>
            <person name="Jansson S."/>
            <person name="Funk C."/>
        </authorList>
    </citation>
    <scope>GENE FAMILY</scope>
    <scope>NOMENCLATURE</scope>
</reference>
<reference key="6">
    <citation type="journal article" date="2007" name="Genome Res.">
        <title>Functional and evolutionary implications of enhanced genomic analysis of rhomboid intramembrane proteases.</title>
        <authorList>
            <person name="Lemberg M.K."/>
            <person name="Freeman M."/>
        </authorList>
    </citation>
    <scope>GENE FAMILY</scope>
    <scope>NOMENCLATURE</scope>
</reference>
<reference key="7">
    <citation type="journal article" date="2012" name="Physiol. Plantarum">
        <title>Rhomboid proteases in plants - still in square one?</title>
        <authorList>
            <person name="Knopf R.R."/>
            <person name="Adam Z."/>
        </authorList>
    </citation>
    <scope>REVIEW</scope>
</reference>
<dbReference type="EC" id="3.4.21.105" evidence="2"/>
<dbReference type="EMBL" id="AC008016">
    <property type="protein sequence ID" value="AAD55606.1"/>
    <property type="molecule type" value="Genomic_DNA"/>
</dbReference>
<dbReference type="EMBL" id="CP002684">
    <property type="protein sequence ID" value="AEE32826.1"/>
    <property type="molecule type" value="Genomic_DNA"/>
</dbReference>
<dbReference type="PIR" id="E96566">
    <property type="entry name" value="E96566"/>
</dbReference>
<dbReference type="RefSeq" id="NP_175667.1">
    <property type="nucleotide sequence ID" value="NM_104136.3"/>
</dbReference>
<dbReference type="SMR" id="Q9SSR0"/>
<dbReference type="FunCoup" id="Q9SSR0">
    <property type="interactions" value="3"/>
</dbReference>
<dbReference type="STRING" id="3702.Q9SSR0"/>
<dbReference type="MEROPS" id="S54.A01"/>
<dbReference type="PaxDb" id="3702-AT1G52580.1"/>
<dbReference type="ProteomicsDB" id="225969"/>
<dbReference type="EnsemblPlants" id="AT1G52580.1">
    <property type="protein sequence ID" value="AT1G52580.1"/>
    <property type="gene ID" value="AT1G52580"/>
</dbReference>
<dbReference type="GeneID" id="841690"/>
<dbReference type="Gramene" id="AT1G52580.1">
    <property type="protein sequence ID" value="AT1G52580.1"/>
    <property type="gene ID" value="AT1G52580"/>
</dbReference>
<dbReference type="KEGG" id="ath:AT1G52580"/>
<dbReference type="Araport" id="AT1G52580"/>
<dbReference type="TAIR" id="AT1G52580">
    <property type="gene designation" value="RBL5"/>
</dbReference>
<dbReference type="eggNOG" id="KOG2289">
    <property type="taxonomic scope" value="Eukaryota"/>
</dbReference>
<dbReference type="HOGENOM" id="CLU_011531_0_0_1"/>
<dbReference type="InParanoid" id="Q9SSR0"/>
<dbReference type="OMA" id="CYQYLLW"/>
<dbReference type="PhylomeDB" id="Q9SSR0"/>
<dbReference type="PRO" id="PR:Q9SSR0"/>
<dbReference type="Proteomes" id="UP000006548">
    <property type="component" value="Chromosome 1"/>
</dbReference>
<dbReference type="ExpressionAtlas" id="Q9SSR0">
    <property type="expression patterns" value="baseline and differential"/>
</dbReference>
<dbReference type="GO" id="GO:0016020">
    <property type="term" value="C:membrane"/>
    <property type="evidence" value="ECO:0007669"/>
    <property type="project" value="UniProtKB-SubCell"/>
</dbReference>
<dbReference type="GO" id="GO:0004252">
    <property type="term" value="F:serine-type endopeptidase activity"/>
    <property type="evidence" value="ECO:0007669"/>
    <property type="project" value="InterPro"/>
</dbReference>
<dbReference type="GO" id="GO:0006508">
    <property type="term" value="P:proteolysis"/>
    <property type="evidence" value="ECO:0007669"/>
    <property type="project" value="UniProtKB-KW"/>
</dbReference>
<dbReference type="FunFam" id="1.20.1540.10:FF:000019">
    <property type="entry name" value="RHOMBOID-like protein"/>
    <property type="match status" value="1"/>
</dbReference>
<dbReference type="Gene3D" id="1.20.1540.10">
    <property type="entry name" value="Rhomboid-like"/>
    <property type="match status" value="1"/>
</dbReference>
<dbReference type="InterPro" id="IPR002610">
    <property type="entry name" value="Peptidase_S54_rhomboid-like"/>
</dbReference>
<dbReference type="InterPro" id="IPR022764">
    <property type="entry name" value="Peptidase_S54_rhomboid_dom"/>
</dbReference>
<dbReference type="InterPro" id="IPR035952">
    <property type="entry name" value="Rhomboid-like_sf"/>
</dbReference>
<dbReference type="PANTHER" id="PTHR22936:SF87">
    <property type="entry name" value="RHOMBOID-LIKE PROTEIN 5"/>
    <property type="match status" value="1"/>
</dbReference>
<dbReference type="PANTHER" id="PTHR22936">
    <property type="entry name" value="RHOMBOID-RELATED"/>
    <property type="match status" value="1"/>
</dbReference>
<dbReference type="Pfam" id="PF01694">
    <property type="entry name" value="Rhomboid"/>
    <property type="match status" value="1"/>
</dbReference>
<dbReference type="SUPFAM" id="SSF144091">
    <property type="entry name" value="Rhomboid-like"/>
    <property type="match status" value="1"/>
</dbReference>
<comment type="function">
    <text evidence="6">Probable rhomboid-type serine protease that catalyzes intramembrane proteolysis. May function in reproductive organs maturation.</text>
</comment>
<comment type="catalytic activity">
    <reaction evidence="2">
        <text>Cleaves type-1 transmembrane domains using a catalytic dyad composed of serine and histidine that are contributed by different transmembrane domains.</text>
        <dbReference type="EC" id="3.4.21.105"/>
    </reaction>
</comment>
<comment type="subcellular location">
    <subcellularLocation>
        <location evidence="3">Membrane</location>
        <topology evidence="3">Multi-pass membrane protein</topology>
    </subcellularLocation>
</comment>
<comment type="similarity">
    <text evidence="7">Belongs to the peptidase S54 family.</text>
</comment>